<proteinExistence type="inferred from homology"/>
<name>ALLH_ECO57</name>
<protein>
    <recommendedName>
        <fullName evidence="1">Oxamate carbamoyltransferase subunit AllH</fullName>
        <shortName evidence="1">OXTCase subunit AllH</shortName>
        <ecNumber evidence="1">2.1.3.5</ecNumber>
    </recommendedName>
</protein>
<accession>P0AAS6</accession>
<accession>P77518</accession>
<evidence type="ECO:0000250" key="1">
    <source>
        <dbReference type="UniProtKB" id="P0AAS5"/>
    </source>
</evidence>
<evidence type="ECO:0000305" key="2"/>
<keyword id="KW-0460">Magnesium</keyword>
<keyword id="KW-1185">Reference proteome</keyword>
<keyword id="KW-0808">Transferase</keyword>
<organism>
    <name type="scientific">Escherichia coli O157:H7</name>
    <dbReference type="NCBI Taxonomy" id="83334"/>
    <lineage>
        <taxon>Bacteria</taxon>
        <taxon>Pseudomonadati</taxon>
        <taxon>Pseudomonadota</taxon>
        <taxon>Gammaproteobacteria</taxon>
        <taxon>Enterobacterales</taxon>
        <taxon>Enterobacteriaceae</taxon>
        <taxon>Escherichia</taxon>
    </lineage>
</organism>
<gene>
    <name evidence="1" type="primary">allH</name>
    <name type="synonym">ylbF</name>
    <name type="ordered locus">Z0675</name>
    <name type="ordered locus">ECs0582</name>
</gene>
<comment type="function">
    <text evidence="1">Component of a carbamoyltransferase involved in the anaerobic nitrogen utilization via the assimilation of allantoin. Catalyzes the conversion of oxalurate (N-carbamoyl-2-oxoglycine) to oxamate and carbamoyl phosphate.</text>
</comment>
<comment type="catalytic activity">
    <reaction evidence="1">
        <text>oxamate + carbamoyl phosphate = N-carbamoyl-2-oxoglycine + phosphate</text>
        <dbReference type="Rhea" id="RHEA:22984"/>
        <dbReference type="ChEBI" id="CHEBI:43474"/>
        <dbReference type="ChEBI" id="CHEBI:57824"/>
        <dbReference type="ChEBI" id="CHEBI:58228"/>
        <dbReference type="ChEBI" id="CHEBI:58363"/>
        <dbReference type="EC" id="2.1.3.5"/>
    </reaction>
    <physiologicalReaction direction="right-to-left" evidence="1">
        <dbReference type="Rhea" id="RHEA:22986"/>
    </physiologicalReaction>
</comment>
<comment type="cofactor">
    <cofactor evidence="1">
        <name>Mg(2+)</name>
        <dbReference type="ChEBI" id="CHEBI:18420"/>
    </cofactor>
</comment>
<comment type="pathway">
    <text evidence="1">Nitrogen metabolism; (S)-allantoin degradation.</text>
</comment>
<comment type="subunit">
    <text evidence="1">The OXTCase is composed of 3 subunits, AllF, AllG and AllH.</text>
</comment>
<comment type="similarity">
    <text evidence="2">Belongs to the AllH family.</text>
</comment>
<reference key="1">
    <citation type="journal article" date="2001" name="Nature">
        <title>Genome sequence of enterohaemorrhagic Escherichia coli O157:H7.</title>
        <authorList>
            <person name="Perna N.T."/>
            <person name="Plunkett G. III"/>
            <person name="Burland V."/>
            <person name="Mau B."/>
            <person name="Glasner J.D."/>
            <person name="Rose D.J."/>
            <person name="Mayhew G.F."/>
            <person name="Evans P.S."/>
            <person name="Gregor J."/>
            <person name="Kirkpatrick H.A."/>
            <person name="Posfai G."/>
            <person name="Hackett J."/>
            <person name="Klink S."/>
            <person name="Boutin A."/>
            <person name="Shao Y."/>
            <person name="Miller L."/>
            <person name="Grotbeck E.J."/>
            <person name="Davis N.W."/>
            <person name="Lim A."/>
            <person name="Dimalanta E.T."/>
            <person name="Potamousis K."/>
            <person name="Apodaca J."/>
            <person name="Anantharaman T.S."/>
            <person name="Lin J."/>
            <person name="Yen G."/>
            <person name="Schwartz D.C."/>
            <person name="Welch R.A."/>
            <person name="Blattner F.R."/>
        </authorList>
    </citation>
    <scope>NUCLEOTIDE SEQUENCE [LARGE SCALE GENOMIC DNA]</scope>
    <source>
        <strain>O157:H7 / EDL933 / ATCC 700927 / EHEC</strain>
    </source>
</reference>
<reference key="2">
    <citation type="journal article" date="2001" name="DNA Res.">
        <title>Complete genome sequence of enterohemorrhagic Escherichia coli O157:H7 and genomic comparison with a laboratory strain K-12.</title>
        <authorList>
            <person name="Hayashi T."/>
            <person name="Makino K."/>
            <person name="Ohnishi M."/>
            <person name="Kurokawa K."/>
            <person name="Ishii K."/>
            <person name="Yokoyama K."/>
            <person name="Han C.-G."/>
            <person name="Ohtsubo E."/>
            <person name="Nakayama K."/>
            <person name="Murata T."/>
            <person name="Tanaka M."/>
            <person name="Tobe T."/>
            <person name="Iida T."/>
            <person name="Takami H."/>
            <person name="Honda T."/>
            <person name="Sasakawa C."/>
            <person name="Ogasawara N."/>
            <person name="Yasunaga T."/>
            <person name="Kuhara S."/>
            <person name="Shiba T."/>
            <person name="Hattori M."/>
            <person name="Shinagawa H."/>
        </authorList>
    </citation>
    <scope>NUCLEOTIDE SEQUENCE [LARGE SCALE GENOMIC DNA]</scope>
    <source>
        <strain>O157:H7 / Sakai / RIMD 0509952 / EHEC</strain>
    </source>
</reference>
<feature type="chain" id="PRO_0000168647" description="Oxamate carbamoyltransferase subunit AllH">
    <location>
        <begin position="1"/>
        <end position="271"/>
    </location>
</feature>
<sequence>MTIIHPLLASSSAPNYRQSWRLAGVWRRAINLMTESGELLTLHRQGSGFGPGGWVLRRAQFDALCGGLCGNERPQVVAQGIRLGRFTVKQPQRYCLLRITPPAHPQPLAAAWMQRAEETGLFGPLALAASDPLPAELRQFRHCFQAALNGVKTDWRHWLGKGPGLTPSHDDTLSGMLLAAWYYGALDARSGRPFFACSDNLQLVTTAVSVSYLRYAAQGYFASPLLHFVHALSCPKRTAVAIDSLLALGHTSGADTLLGFWLGQQLLQGKP</sequence>
<dbReference type="EC" id="2.1.3.5" evidence="1"/>
<dbReference type="EMBL" id="AE005174">
    <property type="protein sequence ID" value="AAG54877.1"/>
    <property type="molecule type" value="Genomic_DNA"/>
</dbReference>
<dbReference type="EMBL" id="BA000007">
    <property type="protein sequence ID" value="BAB34005.1"/>
    <property type="molecule type" value="Genomic_DNA"/>
</dbReference>
<dbReference type="PIR" id="A85552">
    <property type="entry name" value="A85552"/>
</dbReference>
<dbReference type="PIR" id="F90701">
    <property type="entry name" value="F90701"/>
</dbReference>
<dbReference type="RefSeq" id="NP_308609.1">
    <property type="nucleotide sequence ID" value="NC_002695.1"/>
</dbReference>
<dbReference type="RefSeq" id="WP_000152519.1">
    <property type="nucleotide sequence ID" value="NZ_VOAI01000030.1"/>
</dbReference>
<dbReference type="STRING" id="155864.Z0675"/>
<dbReference type="GeneID" id="916659"/>
<dbReference type="KEGG" id="ece:Z0675"/>
<dbReference type="KEGG" id="ecs:ECs_0582"/>
<dbReference type="PATRIC" id="fig|386585.9.peg.689"/>
<dbReference type="eggNOG" id="ENOG502ZBAJ">
    <property type="taxonomic scope" value="Bacteria"/>
</dbReference>
<dbReference type="HOGENOM" id="CLU_072005_2_0_6"/>
<dbReference type="OMA" id="VSCAYLH"/>
<dbReference type="UniPathway" id="UPA00395"/>
<dbReference type="Proteomes" id="UP000000558">
    <property type="component" value="Chromosome"/>
</dbReference>
<dbReference type="Proteomes" id="UP000002519">
    <property type="component" value="Chromosome"/>
</dbReference>
<dbReference type="GO" id="GO:0016740">
    <property type="term" value="F:transferase activity"/>
    <property type="evidence" value="ECO:0007669"/>
    <property type="project" value="UniProtKB-KW"/>
</dbReference>
<dbReference type="InterPro" id="IPR021530">
    <property type="entry name" value="AllH-like"/>
</dbReference>
<dbReference type="Pfam" id="PF11392">
    <property type="entry name" value="AllH"/>
    <property type="match status" value="1"/>
</dbReference>